<organism>
    <name type="scientific">Allorhizobium ampelinum (strain ATCC BAA-846 / DSM 112012 / S4)</name>
    <name type="common">Agrobacterium vitis (strain S4)</name>
    <dbReference type="NCBI Taxonomy" id="311402"/>
    <lineage>
        <taxon>Bacteria</taxon>
        <taxon>Pseudomonadati</taxon>
        <taxon>Pseudomonadota</taxon>
        <taxon>Alphaproteobacteria</taxon>
        <taxon>Hyphomicrobiales</taxon>
        <taxon>Rhizobiaceae</taxon>
        <taxon>Rhizobium/Agrobacterium group</taxon>
        <taxon>Allorhizobium</taxon>
        <taxon>Allorhizobium ampelinum</taxon>
    </lineage>
</organism>
<comment type="similarity">
    <text evidence="1">Belongs to the UPF0260 family.</text>
</comment>
<protein>
    <recommendedName>
        <fullName evidence="1">UPF0260 protein Avi_1324</fullName>
    </recommendedName>
</protein>
<sequence>MTSEPYWKTKRLDEMNTVEWEALCDGCGLCCLNKLEDWESGEVVFTSVACRLLDGESCRCKDYPNRQATVPDCIQLTPDQVEDIAWLPPSCGYRLVHEGRDLYWWHPLVSGDPETVHQAGISARGRTVSEEHVSVEDFEDYLCDWPMTVLLQAEESGDQ</sequence>
<reference key="1">
    <citation type="journal article" date="2009" name="J. Bacteriol.">
        <title>Genome sequences of three Agrobacterium biovars help elucidate the evolution of multichromosome genomes in bacteria.</title>
        <authorList>
            <person name="Slater S.C."/>
            <person name="Goldman B.S."/>
            <person name="Goodner B."/>
            <person name="Setubal J.C."/>
            <person name="Farrand S.K."/>
            <person name="Nester E.W."/>
            <person name="Burr T.J."/>
            <person name="Banta L."/>
            <person name="Dickerman A.W."/>
            <person name="Paulsen I."/>
            <person name="Otten L."/>
            <person name="Suen G."/>
            <person name="Welch R."/>
            <person name="Almeida N.F."/>
            <person name="Arnold F."/>
            <person name="Burton O.T."/>
            <person name="Du Z."/>
            <person name="Ewing A."/>
            <person name="Godsy E."/>
            <person name="Heisel S."/>
            <person name="Houmiel K.L."/>
            <person name="Jhaveri J."/>
            <person name="Lu J."/>
            <person name="Miller N.M."/>
            <person name="Norton S."/>
            <person name="Chen Q."/>
            <person name="Phoolcharoen W."/>
            <person name="Ohlin V."/>
            <person name="Ondrusek D."/>
            <person name="Pride N."/>
            <person name="Stricklin S.L."/>
            <person name="Sun J."/>
            <person name="Wheeler C."/>
            <person name="Wilson L."/>
            <person name="Zhu H."/>
            <person name="Wood D.W."/>
        </authorList>
    </citation>
    <scope>NUCLEOTIDE SEQUENCE [LARGE SCALE GENOMIC DNA]</scope>
    <source>
        <strain>ATCC BAA-846 / DSM 112012 / S4</strain>
    </source>
</reference>
<dbReference type="EMBL" id="CP000633">
    <property type="protein sequence ID" value="ACM35944.1"/>
    <property type="molecule type" value="Genomic_DNA"/>
</dbReference>
<dbReference type="STRING" id="311402.Avi_1324"/>
<dbReference type="DNASU" id="7389072"/>
<dbReference type="KEGG" id="avi:Avi_1324"/>
<dbReference type="eggNOG" id="COG2983">
    <property type="taxonomic scope" value="Bacteria"/>
</dbReference>
<dbReference type="HOGENOM" id="CLU_109769_0_1_5"/>
<dbReference type="Proteomes" id="UP000001596">
    <property type="component" value="Chromosome 1"/>
</dbReference>
<dbReference type="HAMAP" id="MF_00676">
    <property type="entry name" value="UPF0260"/>
    <property type="match status" value="1"/>
</dbReference>
<dbReference type="InterPro" id="IPR005358">
    <property type="entry name" value="Puta_zinc/iron-chelating_dom"/>
</dbReference>
<dbReference type="InterPro" id="IPR008228">
    <property type="entry name" value="UCP006173"/>
</dbReference>
<dbReference type="NCBIfam" id="NF003501">
    <property type="entry name" value="PRK05170.1-5"/>
    <property type="match status" value="1"/>
</dbReference>
<dbReference type="NCBIfam" id="NF003507">
    <property type="entry name" value="PRK05170.2-5"/>
    <property type="match status" value="1"/>
</dbReference>
<dbReference type="PANTHER" id="PTHR37421">
    <property type="entry name" value="UPF0260 PROTEIN YCGN"/>
    <property type="match status" value="1"/>
</dbReference>
<dbReference type="PANTHER" id="PTHR37421:SF1">
    <property type="entry name" value="UPF0260 PROTEIN YCGN"/>
    <property type="match status" value="1"/>
</dbReference>
<dbReference type="Pfam" id="PF03692">
    <property type="entry name" value="CxxCxxCC"/>
    <property type="match status" value="1"/>
</dbReference>
<dbReference type="PIRSF" id="PIRSF006173">
    <property type="entry name" value="UCP006173"/>
    <property type="match status" value="1"/>
</dbReference>
<accession>B9JU16</accession>
<keyword id="KW-1185">Reference proteome</keyword>
<name>Y1324_ALLAM</name>
<feature type="chain" id="PRO_1000147696" description="UPF0260 protein Avi_1324">
    <location>
        <begin position="1"/>
        <end position="159"/>
    </location>
</feature>
<proteinExistence type="inferred from homology"/>
<evidence type="ECO:0000255" key="1">
    <source>
        <dbReference type="HAMAP-Rule" id="MF_00676"/>
    </source>
</evidence>
<gene>
    <name type="ordered locus">Avi_1324</name>
</gene>